<feature type="chain" id="PRO_0000255231" description="Lipid-A-disaccharide synthase">
    <location>
        <begin position="1"/>
        <end position="383"/>
    </location>
</feature>
<dbReference type="EC" id="2.4.1.182" evidence="1"/>
<dbReference type="EMBL" id="CP000020">
    <property type="protein sequence ID" value="AAW86444.1"/>
    <property type="molecule type" value="Genomic_DNA"/>
</dbReference>
<dbReference type="RefSeq" id="WP_011262425.1">
    <property type="nucleotide sequence ID" value="NC_006840.2"/>
</dbReference>
<dbReference type="RefSeq" id="YP_205332.1">
    <property type="nucleotide sequence ID" value="NC_006840.2"/>
</dbReference>
<dbReference type="SMR" id="Q5E3F2"/>
<dbReference type="STRING" id="312309.VF_1949"/>
<dbReference type="CAZy" id="GT19">
    <property type="family name" value="Glycosyltransferase Family 19"/>
</dbReference>
<dbReference type="EnsemblBacteria" id="AAW86444">
    <property type="protein sequence ID" value="AAW86444"/>
    <property type="gene ID" value="VF_1949"/>
</dbReference>
<dbReference type="GeneID" id="54164645"/>
<dbReference type="KEGG" id="vfi:VF_1949"/>
<dbReference type="PATRIC" id="fig|312309.11.peg.1976"/>
<dbReference type="eggNOG" id="COG0763">
    <property type="taxonomic scope" value="Bacteria"/>
</dbReference>
<dbReference type="HOGENOM" id="CLU_036577_3_0_6"/>
<dbReference type="OrthoDB" id="9801642at2"/>
<dbReference type="UniPathway" id="UPA00973"/>
<dbReference type="Proteomes" id="UP000000537">
    <property type="component" value="Chromosome I"/>
</dbReference>
<dbReference type="GO" id="GO:0016020">
    <property type="term" value="C:membrane"/>
    <property type="evidence" value="ECO:0007669"/>
    <property type="project" value="GOC"/>
</dbReference>
<dbReference type="GO" id="GO:0008915">
    <property type="term" value="F:lipid-A-disaccharide synthase activity"/>
    <property type="evidence" value="ECO:0007669"/>
    <property type="project" value="UniProtKB-UniRule"/>
</dbReference>
<dbReference type="GO" id="GO:0005543">
    <property type="term" value="F:phospholipid binding"/>
    <property type="evidence" value="ECO:0007669"/>
    <property type="project" value="TreeGrafter"/>
</dbReference>
<dbReference type="GO" id="GO:0009245">
    <property type="term" value="P:lipid A biosynthetic process"/>
    <property type="evidence" value="ECO:0007669"/>
    <property type="project" value="UniProtKB-UniRule"/>
</dbReference>
<dbReference type="HAMAP" id="MF_00392">
    <property type="entry name" value="LpxB"/>
    <property type="match status" value="1"/>
</dbReference>
<dbReference type="InterPro" id="IPR003835">
    <property type="entry name" value="Glyco_trans_19"/>
</dbReference>
<dbReference type="NCBIfam" id="TIGR00215">
    <property type="entry name" value="lpxB"/>
    <property type="match status" value="1"/>
</dbReference>
<dbReference type="PANTHER" id="PTHR30372">
    <property type="entry name" value="LIPID-A-DISACCHARIDE SYNTHASE"/>
    <property type="match status" value="1"/>
</dbReference>
<dbReference type="PANTHER" id="PTHR30372:SF4">
    <property type="entry name" value="LIPID-A-DISACCHARIDE SYNTHASE, MITOCHONDRIAL-RELATED"/>
    <property type="match status" value="1"/>
</dbReference>
<dbReference type="Pfam" id="PF02684">
    <property type="entry name" value="LpxB"/>
    <property type="match status" value="1"/>
</dbReference>
<dbReference type="SUPFAM" id="SSF53756">
    <property type="entry name" value="UDP-Glycosyltransferase/glycogen phosphorylase"/>
    <property type="match status" value="1"/>
</dbReference>
<reference key="1">
    <citation type="journal article" date="2005" name="Proc. Natl. Acad. Sci. U.S.A.">
        <title>Complete genome sequence of Vibrio fischeri: a symbiotic bacterium with pathogenic congeners.</title>
        <authorList>
            <person name="Ruby E.G."/>
            <person name="Urbanowski M."/>
            <person name="Campbell J."/>
            <person name="Dunn A."/>
            <person name="Faini M."/>
            <person name="Gunsalus R."/>
            <person name="Lostroh P."/>
            <person name="Lupp C."/>
            <person name="McCann J."/>
            <person name="Millikan D."/>
            <person name="Schaefer A."/>
            <person name="Stabb E."/>
            <person name="Stevens A."/>
            <person name="Visick K."/>
            <person name="Whistler C."/>
            <person name="Greenberg E.P."/>
        </authorList>
    </citation>
    <scope>NUCLEOTIDE SEQUENCE [LARGE SCALE GENOMIC DNA]</scope>
    <source>
        <strain>ATCC 700601 / ES114</strain>
    </source>
</reference>
<accession>Q5E3F2</accession>
<organism>
    <name type="scientific">Aliivibrio fischeri (strain ATCC 700601 / ES114)</name>
    <name type="common">Vibrio fischeri</name>
    <dbReference type="NCBI Taxonomy" id="312309"/>
    <lineage>
        <taxon>Bacteria</taxon>
        <taxon>Pseudomonadati</taxon>
        <taxon>Pseudomonadota</taxon>
        <taxon>Gammaproteobacteria</taxon>
        <taxon>Vibrionales</taxon>
        <taxon>Vibrionaceae</taxon>
        <taxon>Aliivibrio</taxon>
    </lineage>
</organism>
<name>LPXB_ALIF1</name>
<evidence type="ECO:0000255" key="1">
    <source>
        <dbReference type="HAMAP-Rule" id="MF_00392"/>
    </source>
</evidence>
<sequence>MTKPLRIGIVAGELSGDTLGEGFIKSIKAQYPDAEFVGIGGPKMIAQGCDSLFDMEELAVMGLVEVLGRLPRLLKVKAELVRYFTQNPPDVFIGIDAPDFNLRLEKTLKDNGIKTVHYVSPSVWAWRPKRIFKIDAATDLVLAFLPFEKAFYDKYNVACEFIGHTLADAIPMETDKIAARDLLGLEQEREWLAVLPGSRGGEVALIAKPFIETCQRIHKQHPNMGFVVAAVNEKRREQFETIWKATAPELDFVIIQDTARNVMTAADAVLLASGTVALECMLVKRPMVVGYQVNKLTGWIAQKLSITEFVSLPNVLAGKELVQEFIQEECHPDFLYPAMEKVLNNDNRELIEKFTEMHQWIRKDADKQAANAVLRLINKETAE</sequence>
<protein>
    <recommendedName>
        <fullName evidence="1">Lipid-A-disaccharide synthase</fullName>
        <ecNumber evidence="1">2.4.1.182</ecNumber>
    </recommendedName>
</protein>
<keyword id="KW-0328">Glycosyltransferase</keyword>
<keyword id="KW-0441">Lipid A biosynthesis</keyword>
<keyword id="KW-0444">Lipid biosynthesis</keyword>
<keyword id="KW-0443">Lipid metabolism</keyword>
<keyword id="KW-1185">Reference proteome</keyword>
<keyword id="KW-0808">Transferase</keyword>
<comment type="function">
    <text evidence="1">Condensation of UDP-2,3-diacylglucosamine and 2,3-diacylglucosamine-1-phosphate to form lipid A disaccharide, a precursor of lipid A, a phosphorylated glycolipid that anchors the lipopolysaccharide to the outer membrane of the cell.</text>
</comment>
<comment type="catalytic activity">
    <reaction evidence="1">
        <text>a lipid X + a UDP-2-N,3-O-bis[(3R)-3-hydroxyacyl]-alpha-D-glucosamine = a lipid A disaccharide + UDP + H(+)</text>
        <dbReference type="Rhea" id="RHEA:67828"/>
        <dbReference type="ChEBI" id="CHEBI:15378"/>
        <dbReference type="ChEBI" id="CHEBI:58223"/>
        <dbReference type="ChEBI" id="CHEBI:137748"/>
        <dbReference type="ChEBI" id="CHEBI:176338"/>
        <dbReference type="ChEBI" id="CHEBI:176343"/>
        <dbReference type="EC" id="2.4.1.182"/>
    </reaction>
</comment>
<comment type="pathway">
    <text evidence="1">Bacterial outer membrane biogenesis; LPS lipid A biosynthesis.</text>
</comment>
<comment type="similarity">
    <text evidence="1">Belongs to the LpxB family.</text>
</comment>
<gene>
    <name evidence="1" type="primary">lpxB</name>
    <name type="ordered locus">VF_1949</name>
</gene>
<proteinExistence type="inferred from homology"/>